<organism>
    <name type="scientific">Bacillus subtilis (strain 168)</name>
    <dbReference type="NCBI Taxonomy" id="224308"/>
    <lineage>
        <taxon>Bacteria</taxon>
        <taxon>Bacillati</taxon>
        <taxon>Bacillota</taxon>
        <taxon>Bacilli</taxon>
        <taxon>Bacillales</taxon>
        <taxon>Bacillaceae</taxon>
        <taxon>Bacillus</taxon>
    </lineage>
</organism>
<comment type="function">
    <text>Activator of the glucitol dehydrogenase gene (gutB).</text>
</comment>
<accession>P39143</accession>
<feature type="chain" id="PRO_0000083879" description="Transcription activator GutR">
    <location>
        <begin position="1"/>
        <end position="829"/>
    </location>
</feature>
<feature type="repeat" description="TPR 1">
    <location>
        <begin position="697"/>
        <end position="730"/>
    </location>
</feature>
<feature type="repeat" description="TPR 2">
    <location>
        <begin position="736"/>
        <end position="769"/>
    </location>
</feature>
<feature type="repeat" description="TPR 3">
    <location>
        <begin position="775"/>
        <end position="808"/>
    </location>
</feature>
<feature type="DNA-binding region" description="H-T-H motif" evidence="1">
    <location>
        <begin position="42"/>
        <end position="61"/>
    </location>
</feature>
<feature type="binding site" evidence="2">
    <location>
        <begin position="200"/>
        <end position="207"/>
    </location>
    <ligand>
        <name>ATP</name>
        <dbReference type="ChEBI" id="CHEBI:30616"/>
    </ligand>
</feature>
<feature type="sequence variant" description="In gutR1; results in the constitutive expression of gutB.">
    <original>S</original>
    <variation>R</variation>
    <location>
        <position position="289"/>
    </location>
</feature>
<dbReference type="EMBL" id="L19113">
    <property type="protein sequence ID" value="AAA20676.1"/>
    <property type="molecule type" value="Genomic_DNA"/>
</dbReference>
<dbReference type="EMBL" id="AB007637">
    <property type="protein sequence ID" value="BAA22758.1"/>
    <property type="molecule type" value="Genomic_DNA"/>
</dbReference>
<dbReference type="EMBL" id="AL009126">
    <property type="protein sequence ID" value="CAB12433.1"/>
    <property type="molecule type" value="Genomic_DNA"/>
</dbReference>
<dbReference type="PIR" id="I40014">
    <property type="entry name" value="I40014"/>
</dbReference>
<dbReference type="RefSeq" id="NP_388495.1">
    <property type="nucleotide sequence ID" value="NC_000964.3"/>
</dbReference>
<dbReference type="RefSeq" id="WP_003234045.1">
    <property type="nucleotide sequence ID" value="NZ_OZ025638.1"/>
</dbReference>
<dbReference type="SMR" id="P39143"/>
<dbReference type="FunCoup" id="P39143">
    <property type="interactions" value="59"/>
</dbReference>
<dbReference type="STRING" id="224308.BSU06140"/>
<dbReference type="PaxDb" id="224308-BSU06140"/>
<dbReference type="EnsemblBacteria" id="CAB12433">
    <property type="protein sequence ID" value="CAB12433"/>
    <property type="gene ID" value="BSU_06140"/>
</dbReference>
<dbReference type="GeneID" id="938026"/>
<dbReference type="KEGG" id="bsu:BSU06140"/>
<dbReference type="PATRIC" id="fig|224308.179.peg.665"/>
<dbReference type="eggNOG" id="COG0457">
    <property type="taxonomic scope" value="Bacteria"/>
</dbReference>
<dbReference type="InParanoid" id="P39143"/>
<dbReference type="OrthoDB" id="2893300at2"/>
<dbReference type="BioCyc" id="BSUB:BSU06140-MONOMER"/>
<dbReference type="Proteomes" id="UP000001570">
    <property type="component" value="Chromosome"/>
</dbReference>
<dbReference type="GO" id="GO:0005829">
    <property type="term" value="C:cytosol"/>
    <property type="evidence" value="ECO:0000318"/>
    <property type="project" value="GO_Central"/>
</dbReference>
<dbReference type="GO" id="GO:0043531">
    <property type="term" value="F:ADP binding"/>
    <property type="evidence" value="ECO:0007669"/>
    <property type="project" value="InterPro"/>
</dbReference>
<dbReference type="GO" id="GO:0005524">
    <property type="term" value="F:ATP binding"/>
    <property type="evidence" value="ECO:0007669"/>
    <property type="project" value="UniProtKB-KW"/>
</dbReference>
<dbReference type="GO" id="GO:0016887">
    <property type="term" value="F:ATP hydrolysis activity"/>
    <property type="evidence" value="ECO:0007669"/>
    <property type="project" value="InterPro"/>
</dbReference>
<dbReference type="GO" id="GO:0003677">
    <property type="term" value="F:DNA binding"/>
    <property type="evidence" value="ECO:0007669"/>
    <property type="project" value="UniProtKB-KW"/>
</dbReference>
<dbReference type="GO" id="GO:0051607">
    <property type="term" value="P:defense response to virus"/>
    <property type="evidence" value="ECO:0000318"/>
    <property type="project" value="GO_Central"/>
</dbReference>
<dbReference type="Gene3D" id="3.40.50.300">
    <property type="entry name" value="P-loop containing nucleotide triphosphate hydrolases"/>
    <property type="match status" value="1"/>
</dbReference>
<dbReference type="Gene3D" id="1.25.40.10">
    <property type="entry name" value="Tetratricopeptide repeat domain"/>
    <property type="match status" value="1"/>
</dbReference>
<dbReference type="InterPro" id="IPR003593">
    <property type="entry name" value="AAA+_ATPase"/>
</dbReference>
<dbReference type="InterPro" id="IPR002182">
    <property type="entry name" value="NB-ARC"/>
</dbReference>
<dbReference type="InterPro" id="IPR027417">
    <property type="entry name" value="P-loop_NTPase"/>
</dbReference>
<dbReference type="InterPro" id="IPR011990">
    <property type="entry name" value="TPR-like_helical_dom_sf"/>
</dbReference>
<dbReference type="InterPro" id="IPR019734">
    <property type="entry name" value="TPR_rpt"/>
</dbReference>
<dbReference type="PANTHER" id="PTHR10271">
    <property type="entry name" value="INTERFERON-INDUCED PROTEIN WITH TETRATRICOPEPTIDE REPEATS"/>
    <property type="match status" value="1"/>
</dbReference>
<dbReference type="PANTHER" id="PTHR10271:SF0">
    <property type="entry name" value="INTERFERON-INDUCED PROTEIN WITH TETRATRICOPEPTIDE REPEATS 5"/>
    <property type="match status" value="1"/>
</dbReference>
<dbReference type="Pfam" id="PF00931">
    <property type="entry name" value="NB-ARC"/>
    <property type="match status" value="1"/>
</dbReference>
<dbReference type="Pfam" id="PF13181">
    <property type="entry name" value="TPR_8"/>
    <property type="match status" value="1"/>
</dbReference>
<dbReference type="SMART" id="SM00382">
    <property type="entry name" value="AAA"/>
    <property type="match status" value="1"/>
</dbReference>
<dbReference type="SMART" id="SM00028">
    <property type="entry name" value="TPR"/>
    <property type="match status" value="3"/>
</dbReference>
<dbReference type="SUPFAM" id="SSF52540">
    <property type="entry name" value="P-loop containing nucleoside triphosphate hydrolases"/>
    <property type="match status" value="1"/>
</dbReference>
<dbReference type="SUPFAM" id="SSF48452">
    <property type="entry name" value="TPR-like"/>
    <property type="match status" value="2"/>
</dbReference>
<dbReference type="PROSITE" id="PS50005">
    <property type="entry name" value="TPR"/>
    <property type="match status" value="3"/>
</dbReference>
<dbReference type="PROSITE" id="PS50293">
    <property type="entry name" value="TPR_REGION"/>
    <property type="match status" value="1"/>
</dbReference>
<proteinExistence type="predicted"/>
<keyword id="KW-0010">Activator</keyword>
<keyword id="KW-0067">ATP-binding</keyword>
<keyword id="KW-0238">DNA-binding</keyword>
<keyword id="KW-0547">Nucleotide-binding</keyword>
<keyword id="KW-1185">Reference proteome</keyword>
<keyword id="KW-0677">Repeat</keyword>
<keyword id="KW-0802">TPR repeat</keyword>
<keyword id="KW-0804">Transcription</keyword>
<keyword id="KW-0805">Transcription regulation</keyword>
<reference key="1">
    <citation type="journal article" date="1994" name="J. Bacteriol.">
        <title>Glucitol induction in Bacillus subtilis is mediated by a regulatory factor, GutR.</title>
        <authorList>
            <person name="Ye R."/>
            <person name="Rehemtulla S.N."/>
            <person name="Wong S.-L."/>
        </authorList>
    </citation>
    <scope>NUCLEOTIDE SEQUENCE [GENOMIC DNA]</scope>
    <source>
        <strain>168</strain>
    </source>
</reference>
<reference key="2">
    <citation type="journal article" date="1997" name="DNA Res.">
        <title>Sequence analysis of the groESL-cotA region of the Bacillus subtilis genome, containing the restriction/modification system genes.</title>
        <authorList>
            <person name="Kasahara Y."/>
            <person name="Nakai S."/>
            <person name="Ogasawara N."/>
            <person name="Yata K."/>
            <person name="Sadaie Y."/>
        </authorList>
    </citation>
    <scope>NUCLEOTIDE SEQUENCE [GENOMIC DNA]</scope>
    <source>
        <strain>168 / Marburg / ATCC 6051 / DSM 10 / JCM 1465 / NBRC 13719 / NCIMB 3610 / NRRL NRS-744 / VKM B-501</strain>
    </source>
</reference>
<reference key="3">
    <citation type="journal article" date="1997" name="Nature">
        <title>The complete genome sequence of the Gram-positive bacterium Bacillus subtilis.</title>
        <authorList>
            <person name="Kunst F."/>
            <person name="Ogasawara N."/>
            <person name="Moszer I."/>
            <person name="Albertini A.M."/>
            <person name="Alloni G."/>
            <person name="Azevedo V."/>
            <person name="Bertero M.G."/>
            <person name="Bessieres P."/>
            <person name="Bolotin A."/>
            <person name="Borchert S."/>
            <person name="Borriss R."/>
            <person name="Boursier L."/>
            <person name="Brans A."/>
            <person name="Braun M."/>
            <person name="Brignell S.C."/>
            <person name="Bron S."/>
            <person name="Brouillet S."/>
            <person name="Bruschi C.V."/>
            <person name="Caldwell B."/>
            <person name="Capuano V."/>
            <person name="Carter N.M."/>
            <person name="Choi S.-K."/>
            <person name="Codani J.-J."/>
            <person name="Connerton I.F."/>
            <person name="Cummings N.J."/>
            <person name="Daniel R.A."/>
            <person name="Denizot F."/>
            <person name="Devine K.M."/>
            <person name="Duesterhoeft A."/>
            <person name="Ehrlich S.D."/>
            <person name="Emmerson P.T."/>
            <person name="Entian K.-D."/>
            <person name="Errington J."/>
            <person name="Fabret C."/>
            <person name="Ferrari E."/>
            <person name="Foulger D."/>
            <person name="Fritz C."/>
            <person name="Fujita M."/>
            <person name="Fujita Y."/>
            <person name="Fuma S."/>
            <person name="Galizzi A."/>
            <person name="Galleron N."/>
            <person name="Ghim S.-Y."/>
            <person name="Glaser P."/>
            <person name="Goffeau A."/>
            <person name="Golightly E.J."/>
            <person name="Grandi G."/>
            <person name="Guiseppi G."/>
            <person name="Guy B.J."/>
            <person name="Haga K."/>
            <person name="Haiech J."/>
            <person name="Harwood C.R."/>
            <person name="Henaut A."/>
            <person name="Hilbert H."/>
            <person name="Holsappel S."/>
            <person name="Hosono S."/>
            <person name="Hullo M.-F."/>
            <person name="Itaya M."/>
            <person name="Jones L.-M."/>
            <person name="Joris B."/>
            <person name="Karamata D."/>
            <person name="Kasahara Y."/>
            <person name="Klaerr-Blanchard M."/>
            <person name="Klein C."/>
            <person name="Kobayashi Y."/>
            <person name="Koetter P."/>
            <person name="Koningstein G."/>
            <person name="Krogh S."/>
            <person name="Kumano M."/>
            <person name="Kurita K."/>
            <person name="Lapidus A."/>
            <person name="Lardinois S."/>
            <person name="Lauber J."/>
            <person name="Lazarevic V."/>
            <person name="Lee S.-M."/>
            <person name="Levine A."/>
            <person name="Liu H."/>
            <person name="Masuda S."/>
            <person name="Mauel C."/>
            <person name="Medigue C."/>
            <person name="Medina N."/>
            <person name="Mellado R.P."/>
            <person name="Mizuno M."/>
            <person name="Moestl D."/>
            <person name="Nakai S."/>
            <person name="Noback M."/>
            <person name="Noone D."/>
            <person name="O'Reilly M."/>
            <person name="Ogawa K."/>
            <person name="Ogiwara A."/>
            <person name="Oudega B."/>
            <person name="Park S.-H."/>
            <person name="Parro V."/>
            <person name="Pohl T.M."/>
            <person name="Portetelle D."/>
            <person name="Porwollik S."/>
            <person name="Prescott A.M."/>
            <person name="Presecan E."/>
            <person name="Pujic P."/>
            <person name="Purnelle B."/>
            <person name="Rapoport G."/>
            <person name="Rey M."/>
            <person name="Reynolds S."/>
            <person name="Rieger M."/>
            <person name="Rivolta C."/>
            <person name="Rocha E."/>
            <person name="Roche B."/>
            <person name="Rose M."/>
            <person name="Sadaie Y."/>
            <person name="Sato T."/>
            <person name="Scanlan E."/>
            <person name="Schleich S."/>
            <person name="Schroeter R."/>
            <person name="Scoffone F."/>
            <person name="Sekiguchi J."/>
            <person name="Sekowska A."/>
            <person name="Seror S.J."/>
            <person name="Serror P."/>
            <person name="Shin B.-S."/>
            <person name="Soldo B."/>
            <person name="Sorokin A."/>
            <person name="Tacconi E."/>
            <person name="Takagi T."/>
            <person name="Takahashi H."/>
            <person name="Takemaru K."/>
            <person name="Takeuchi M."/>
            <person name="Tamakoshi A."/>
            <person name="Tanaka T."/>
            <person name="Terpstra P."/>
            <person name="Tognoni A."/>
            <person name="Tosato V."/>
            <person name="Uchiyama S."/>
            <person name="Vandenbol M."/>
            <person name="Vannier F."/>
            <person name="Vassarotti A."/>
            <person name="Viari A."/>
            <person name="Wambutt R."/>
            <person name="Wedler E."/>
            <person name="Wedler H."/>
            <person name="Weitzenegger T."/>
            <person name="Winters P."/>
            <person name="Wipat A."/>
            <person name="Yamamoto H."/>
            <person name="Yamane K."/>
            <person name="Yasumoto K."/>
            <person name="Yata K."/>
            <person name="Yoshida K."/>
            <person name="Yoshikawa H.-F."/>
            <person name="Zumstein E."/>
            <person name="Yoshikawa H."/>
            <person name="Danchin A."/>
        </authorList>
    </citation>
    <scope>NUCLEOTIDE SEQUENCE [LARGE SCALE GENOMIC DNA]</scope>
    <source>
        <strain>168</strain>
    </source>
</reference>
<sequence length="829" mass="95076">MAELENRKQFAQMLAPGVKTLKLHPDYKVRRKKNEKTGQSYIDKIALQLGVSPNTIKSWIGQMGANYIPGRIDDGKLFGMIWIILEKTDLDIEWLTDLLEATTIPVIKPALPVWAASCLKKAKILRKDGLFGAPSEGEIENVVKRLFHDRPGQETNALTEQPITHNLPSRWSGRFIGRSFDMEAIRQWMLSPSPVCLITGWAGMGKTTIALEAAYSCVDDTSVWPAFNSIIWVSADWKGLSFSDFLNTIAYQLGRKEQIDKSINVKRFVVRNALANYTREKPILLIVDSIDTAERDIHEFITSLPQGVKVLLTARENVKQTYRESFGEMTAIQLSGLDQTDAHEFFQQEVHHCLQTCNLPRKREKLEQLLHLSSDLKNEFISATAGNPKAMALSIAYMSDDDIPAQQLIHELGKAGYSLLELFEFLFGRTWDRCNEDTRKLWQTLCFFSKPPDEKSLAAAAGLDARRFHYAMEQMRSYALIQPERSQGRTQYLAHQTVVAYGEQHLSEQHEYEKEARNRWAHYYIDYAETHLKREQPNSIYWSYLLGRNLDQMKQEWPNILKVIQWASETEQKEILIELITRISHFLSRINLPLRIEYGRKAADAAHHLGQHTREAYFRIDTSGWALMEVNDLDGALQQIEAGLKILEQSDAHDAYDLKVWGHALKARLFLKDGQQEKAETILNEIENQPISPTIQHRVLLVRGDLSFARGYHVEAIQLYEAANEISSTYGGEKTIEAYFNLGVAYVKCDQFEKAEEAFEQMLYDKHNANQVELIYYHYGMAQLLYRKGEKTKAVESNQKAIRLIDSWEPAIGIRGEVERLARATKENE</sequence>
<evidence type="ECO:0000250" key="1"/>
<evidence type="ECO:0000255" key="2"/>
<protein>
    <recommendedName>
        <fullName>Transcription activator GutR</fullName>
    </recommendedName>
</protein>
<name>GUTR_BACSU</name>
<gene>
    <name type="primary">gutR</name>
    <name type="ordered locus">BSU06140</name>
</gene>